<keyword id="KW-0067">ATP-binding</keyword>
<keyword id="KW-0436">Ligase</keyword>
<keyword id="KW-0547">Nucleotide-binding</keyword>
<keyword id="KW-0554">One-carbon metabolism</keyword>
<keyword id="KW-1185">Reference proteome</keyword>
<reference key="1">
    <citation type="journal article" date="2011" name="J. Bacteriol.">
        <title>Complete genome and proteome of Acholeplasma laidlawii.</title>
        <authorList>
            <person name="Lazarev V.N."/>
            <person name="Levitskii S.A."/>
            <person name="Basovskii Y.I."/>
            <person name="Chukin M.M."/>
            <person name="Akopian T.A."/>
            <person name="Vereshchagin V.V."/>
            <person name="Kostrjukova E.S."/>
            <person name="Kovaleva G.Y."/>
            <person name="Kazanov M.D."/>
            <person name="Malko D.B."/>
            <person name="Vitreschak A.G."/>
            <person name="Sernova N.V."/>
            <person name="Gelfand M.S."/>
            <person name="Demina I.A."/>
            <person name="Serebryakova M.V."/>
            <person name="Galyamina M.A."/>
            <person name="Vtyurin N.N."/>
            <person name="Rogov S.I."/>
            <person name="Alexeev D.G."/>
            <person name="Ladygina V.G."/>
            <person name="Govorun V.M."/>
        </authorList>
    </citation>
    <scope>NUCLEOTIDE SEQUENCE [LARGE SCALE GENOMIC DNA]</scope>
    <source>
        <strain>PG-8A</strain>
    </source>
</reference>
<protein>
    <recommendedName>
        <fullName evidence="1">Formate--tetrahydrofolate ligase</fullName>
        <ecNumber evidence="1">6.3.4.3</ecNumber>
    </recommendedName>
    <alternativeName>
        <fullName evidence="1">Formyltetrahydrofolate synthetase</fullName>
        <shortName evidence="1">FHS</shortName>
        <shortName evidence="1">FTHFS</shortName>
    </alternativeName>
</protein>
<proteinExistence type="inferred from homology"/>
<gene>
    <name evidence="1" type="primary">fhs</name>
    <name type="ordered locus">ACL_0032</name>
</gene>
<comment type="catalytic activity">
    <reaction evidence="1">
        <text>(6S)-5,6,7,8-tetrahydrofolate + formate + ATP = (6R)-10-formyltetrahydrofolate + ADP + phosphate</text>
        <dbReference type="Rhea" id="RHEA:20221"/>
        <dbReference type="ChEBI" id="CHEBI:15740"/>
        <dbReference type="ChEBI" id="CHEBI:30616"/>
        <dbReference type="ChEBI" id="CHEBI:43474"/>
        <dbReference type="ChEBI" id="CHEBI:57453"/>
        <dbReference type="ChEBI" id="CHEBI:195366"/>
        <dbReference type="ChEBI" id="CHEBI:456216"/>
        <dbReference type="EC" id="6.3.4.3"/>
    </reaction>
</comment>
<comment type="pathway">
    <text evidence="1">One-carbon metabolism; tetrahydrofolate interconversion.</text>
</comment>
<comment type="similarity">
    <text evidence="1">Belongs to the formate--tetrahydrofolate ligase family.</text>
</comment>
<organism>
    <name type="scientific">Acholeplasma laidlawii (strain PG-8A)</name>
    <dbReference type="NCBI Taxonomy" id="441768"/>
    <lineage>
        <taxon>Bacteria</taxon>
        <taxon>Bacillati</taxon>
        <taxon>Mycoplasmatota</taxon>
        <taxon>Mollicutes</taxon>
        <taxon>Acholeplasmatales</taxon>
        <taxon>Acholeplasmataceae</taxon>
        <taxon>Acholeplasma</taxon>
    </lineage>
</organism>
<dbReference type="EC" id="6.3.4.3" evidence="1"/>
<dbReference type="EMBL" id="CP000896">
    <property type="protein sequence ID" value="ABX80675.1"/>
    <property type="molecule type" value="Genomic_DNA"/>
</dbReference>
<dbReference type="RefSeq" id="WP_012242006.1">
    <property type="nucleotide sequence ID" value="NC_010163.1"/>
</dbReference>
<dbReference type="SMR" id="A9NE95"/>
<dbReference type="STRING" id="441768.ACL_0032"/>
<dbReference type="GeneID" id="41338236"/>
<dbReference type="KEGG" id="acl:ACL_0032"/>
<dbReference type="eggNOG" id="COG2759">
    <property type="taxonomic scope" value="Bacteria"/>
</dbReference>
<dbReference type="HOGENOM" id="CLU_003601_3_3_14"/>
<dbReference type="OrthoDB" id="9761733at2"/>
<dbReference type="UniPathway" id="UPA00193"/>
<dbReference type="Proteomes" id="UP000008558">
    <property type="component" value="Chromosome"/>
</dbReference>
<dbReference type="GO" id="GO:0005524">
    <property type="term" value="F:ATP binding"/>
    <property type="evidence" value="ECO:0007669"/>
    <property type="project" value="UniProtKB-UniRule"/>
</dbReference>
<dbReference type="GO" id="GO:0004329">
    <property type="term" value="F:formate-tetrahydrofolate ligase activity"/>
    <property type="evidence" value="ECO:0007669"/>
    <property type="project" value="UniProtKB-UniRule"/>
</dbReference>
<dbReference type="GO" id="GO:0035999">
    <property type="term" value="P:tetrahydrofolate interconversion"/>
    <property type="evidence" value="ECO:0007669"/>
    <property type="project" value="UniProtKB-UniRule"/>
</dbReference>
<dbReference type="Gene3D" id="3.30.1510.10">
    <property type="entry name" value="Domain 2, N(10)-formyltetrahydrofolate synthetase"/>
    <property type="match status" value="1"/>
</dbReference>
<dbReference type="Gene3D" id="3.10.410.10">
    <property type="entry name" value="Formyltetrahydrofolate synthetase, domain 3"/>
    <property type="match status" value="1"/>
</dbReference>
<dbReference type="Gene3D" id="3.40.50.300">
    <property type="entry name" value="P-loop containing nucleotide triphosphate hydrolases"/>
    <property type="match status" value="1"/>
</dbReference>
<dbReference type="HAMAP" id="MF_01543">
    <property type="entry name" value="FTHFS"/>
    <property type="match status" value="1"/>
</dbReference>
<dbReference type="InterPro" id="IPR000559">
    <property type="entry name" value="Formate_THF_ligase"/>
</dbReference>
<dbReference type="InterPro" id="IPR027417">
    <property type="entry name" value="P-loop_NTPase"/>
</dbReference>
<dbReference type="NCBIfam" id="NF010030">
    <property type="entry name" value="PRK13505.1"/>
    <property type="match status" value="1"/>
</dbReference>
<dbReference type="Pfam" id="PF01268">
    <property type="entry name" value="FTHFS"/>
    <property type="match status" value="1"/>
</dbReference>
<dbReference type="SUPFAM" id="SSF52540">
    <property type="entry name" value="P-loop containing nucleoside triphosphate hydrolases"/>
    <property type="match status" value="1"/>
</dbReference>
<accession>A9NE95</accession>
<name>FTHS_ACHLI</name>
<sequence>MNTYNYLIDELHILDDEIISYGKDKFKIELSLQERLKDKAPGKLILVTSINPTSSGEGKTTLSIGLAQGFKKNGKDVMLALREPSMGPVFGMKGGATGGGVSILEPSLDIDLHFNGDIHALTSANNLLSAIIDNHMYFGNELNIKDVYWQRALDVNDRSLREVKTKARDDKFTITAASEMMAILALARDFKDLKERLNNILIGTDKDGKDLFVSDLKCADSLALLLKDAIKPNLVFAKEMVPALVHAGPFANIAHGCNSVIATNTALKLADYVITEAGFGADLGMEKFLHIKQPHLYTKASVVVVVATIKALKLHGGVTESNLDEPNIEALSKGLENIEKHLENIKLFGLNSVVALNKFDTDSEEELQFLKNWARINHLNYGISEGYSKGGEGTKDLAKLVEKVAYEPSKFKRIYSNEENHEYKIRKIAENIYGAKDVIFSQQAKKKLNQYKHLEIPICIAKTPLSLSGDPKLKGRPRDFVLEISDIKVSLGANLLVVLTKGINTMPGLNNRPRALDFKLDDKGELI</sequence>
<feature type="chain" id="PRO_0000333311" description="Formate--tetrahydrofolate ligase">
    <location>
        <begin position="1"/>
        <end position="527"/>
    </location>
</feature>
<feature type="binding site" evidence="1">
    <location>
        <begin position="53"/>
        <end position="60"/>
    </location>
    <ligand>
        <name>ATP</name>
        <dbReference type="ChEBI" id="CHEBI:30616"/>
    </ligand>
</feature>
<evidence type="ECO:0000255" key="1">
    <source>
        <dbReference type="HAMAP-Rule" id="MF_01543"/>
    </source>
</evidence>